<sequence length="366" mass="41962">MTPEHLPTEQYEAQLAEKVVRLQTMMAPFAAPVPEVFRSPVSHYRMRAEFRLWHDGDDLYHIIFDQQTRSRIRVDSFPAASALINQLMTAMLEGVRNNPVLRHKLFQIDYLTTLSNQAVVSLLYHKKLDDTWREQAEALRDALRAQGLNVHLIGRATKTKIELDQDYIDERLPVGGREMIYRQVENSFTQPNAAMNIQMLEWALDVTKEATGDLLELYCGNGNFSLALARNFDRVLATEIAKPSVAAAQYNIAANHIDNVQIIRMAAEEFTQAMNGVREFNRLQGIDLQSYQCETIFVDPPRSGLDSETEKMVQAYPRILYISCNPETLCRNLETLSQTHNVTRLALFDQFPYTHHMECGVLLTRK</sequence>
<evidence type="ECO:0000255" key="1">
    <source>
        <dbReference type="HAMAP-Rule" id="MF_01011"/>
    </source>
</evidence>
<feature type="chain" id="PRO_1000198547" description="tRNA/tmRNA (uracil-C(5))-methyltransferase">
    <location>
        <begin position="1"/>
        <end position="366"/>
    </location>
</feature>
<feature type="active site" description="Nucleophile" evidence="1">
    <location>
        <position position="324"/>
    </location>
</feature>
<feature type="active site" description="Proton acceptor" evidence="1">
    <location>
        <position position="358"/>
    </location>
</feature>
<feature type="binding site" evidence="1">
    <location>
        <position position="190"/>
    </location>
    <ligand>
        <name>S-adenosyl-L-methionine</name>
        <dbReference type="ChEBI" id="CHEBI:59789"/>
    </ligand>
</feature>
<feature type="binding site" evidence="1">
    <location>
        <position position="218"/>
    </location>
    <ligand>
        <name>S-adenosyl-L-methionine</name>
        <dbReference type="ChEBI" id="CHEBI:59789"/>
    </ligand>
</feature>
<feature type="binding site" evidence="1">
    <location>
        <position position="223"/>
    </location>
    <ligand>
        <name>S-adenosyl-L-methionine</name>
        <dbReference type="ChEBI" id="CHEBI:59789"/>
    </ligand>
</feature>
<feature type="binding site" evidence="1">
    <location>
        <position position="239"/>
    </location>
    <ligand>
        <name>S-adenosyl-L-methionine</name>
        <dbReference type="ChEBI" id="CHEBI:59789"/>
    </ligand>
</feature>
<feature type="binding site" evidence="1">
    <location>
        <position position="299"/>
    </location>
    <ligand>
        <name>S-adenosyl-L-methionine</name>
        <dbReference type="ChEBI" id="CHEBI:59789"/>
    </ligand>
</feature>
<proteinExistence type="inferred from homology"/>
<keyword id="KW-0489">Methyltransferase</keyword>
<keyword id="KW-0949">S-adenosyl-L-methionine</keyword>
<keyword id="KW-0808">Transferase</keyword>
<keyword id="KW-0819">tRNA processing</keyword>
<dbReference type="EC" id="2.1.1.-" evidence="1"/>
<dbReference type="EC" id="2.1.1.35" evidence="1"/>
<dbReference type="EMBL" id="CP000964">
    <property type="protein sequence ID" value="ACI10348.1"/>
    <property type="molecule type" value="Genomic_DNA"/>
</dbReference>
<dbReference type="SMR" id="B5XZ11"/>
<dbReference type="KEGG" id="kpe:KPK_5427"/>
<dbReference type="HOGENOM" id="CLU_043022_0_0_6"/>
<dbReference type="Proteomes" id="UP000001734">
    <property type="component" value="Chromosome"/>
</dbReference>
<dbReference type="GO" id="GO:0005829">
    <property type="term" value="C:cytosol"/>
    <property type="evidence" value="ECO:0007669"/>
    <property type="project" value="TreeGrafter"/>
</dbReference>
<dbReference type="GO" id="GO:0019843">
    <property type="term" value="F:rRNA binding"/>
    <property type="evidence" value="ECO:0007669"/>
    <property type="project" value="TreeGrafter"/>
</dbReference>
<dbReference type="GO" id="GO:0030697">
    <property type="term" value="F:tRNA (uracil(54)-C5)-methyltransferase activity, S-adenosyl methionine-dependent"/>
    <property type="evidence" value="ECO:0007669"/>
    <property type="project" value="UniProtKB-UniRule"/>
</dbReference>
<dbReference type="GO" id="GO:0000049">
    <property type="term" value="F:tRNA binding"/>
    <property type="evidence" value="ECO:0007669"/>
    <property type="project" value="TreeGrafter"/>
</dbReference>
<dbReference type="GO" id="GO:0030488">
    <property type="term" value="P:tRNA methylation"/>
    <property type="evidence" value="ECO:0007669"/>
    <property type="project" value="UniProtKB-UniRule"/>
</dbReference>
<dbReference type="CDD" id="cd02440">
    <property type="entry name" value="AdoMet_MTases"/>
    <property type="match status" value="1"/>
</dbReference>
<dbReference type="FunFam" id="2.40.50.1070:FF:000001">
    <property type="entry name" value="tRNA/tmRNA (uracil-C(5))-methyltransferase"/>
    <property type="match status" value="1"/>
</dbReference>
<dbReference type="FunFam" id="3.40.50.150:FF:000012">
    <property type="entry name" value="tRNA/tmRNA (uracil-C(5))-methyltransferase"/>
    <property type="match status" value="1"/>
</dbReference>
<dbReference type="Gene3D" id="2.40.50.1070">
    <property type="match status" value="1"/>
</dbReference>
<dbReference type="Gene3D" id="3.40.50.150">
    <property type="entry name" value="Vaccinia Virus protein VP39"/>
    <property type="match status" value="1"/>
</dbReference>
<dbReference type="HAMAP" id="MF_01011">
    <property type="entry name" value="RNA_methyltr_TrmA"/>
    <property type="match status" value="1"/>
</dbReference>
<dbReference type="InterPro" id="IPR030390">
    <property type="entry name" value="MeTrfase_TrmA_AS"/>
</dbReference>
<dbReference type="InterPro" id="IPR030391">
    <property type="entry name" value="MeTrfase_TrmA_CS"/>
</dbReference>
<dbReference type="InterPro" id="IPR029063">
    <property type="entry name" value="SAM-dependent_MTases_sf"/>
</dbReference>
<dbReference type="InterPro" id="IPR011869">
    <property type="entry name" value="TrmA_MeTrfase"/>
</dbReference>
<dbReference type="InterPro" id="IPR010280">
    <property type="entry name" value="U5_MeTrfase_fam"/>
</dbReference>
<dbReference type="NCBIfam" id="TIGR02143">
    <property type="entry name" value="trmA_only"/>
    <property type="match status" value="1"/>
</dbReference>
<dbReference type="PANTHER" id="PTHR47790">
    <property type="entry name" value="TRNA/TMRNA (URACIL-C(5))-METHYLTRANSFERASE"/>
    <property type="match status" value="1"/>
</dbReference>
<dbReference type="PANTHER" id="PTHR47790:SF2">
    <property type="entry name" value="TRNA_TMRNA (URACIL-C(5))-METHYLTRANSFERASE"/>
    <property type="match status" value="1"/>
</dbReference>
<dbReference type="Pfam" id="PF05958">
    <property type="entry name" value="tRNA_U5-meth_tr"/>
    <property type="match status" value="1"/>
</dbReference>
<dbReference type="SUPFAM" id="SSF53335">
    <property type="entry name" value="S-adenosyl-L-methionine-dependent methyltransferases"/>
    <property type="match status" value="1"/>
</dbReference>
<dbReference type="PROSITE" id="PS51687">
    <property type="entry name" value="SAM_MT_RNA_M5U"/>
    <property type="match status" value="1"/>
</dbReference>
<dbReference type="PROSITE" id="PS01230">
    <property type="entry name" value="TRMA_1"/>
    <property type="match status" value="1"/>
</dbReference>
<dbReference type="PROSITE" id="PS01231">
    <property type="entry name" value="TRMA_2"/>
    <property type="match status" value="1"/>
</dbReference>
<organism>
    <name type="scientific">Klebsiella pneumoniae (strain 342)</name>
    <dbReference type="NCBI Taxonomy" id="507522"/>
    <lineage>
        <taxon>Bacteria</taxon>
        <taxon>Pseudomonadati</taxon>
        <taxon>Pseudomonadota</taxon>
        <taxon>Gammaproteobacteria</taxon>
        <taxon>Enterobacterales</taxon>
        <taxon>Enterobacteriaceae</taxon>
        <taxon>Klebsiella/Raoultella group</taxon>
        <taxon>Klebsiella</taxon>
        <taxon>Klebsiella pneumoniae complex</taxon>
    </lineage>
</organism>
<accession>B5XZ11</accession>
<name>TRMA_KLEP3</name>
<protein>
    <recommendedName>
        <fullName evidence="1">tRNA/tmRNA (uracil-C(5))-methyltransferase</fullName>
        <ecNumber evidence="1">2.1.1.-</ecNumber>
        <ecNumber evidence="1">2.1.1.35</ecNumber>
    </recommendedName>
    <alternativeName>
        <fullName evidence="1">tRNA (uracil(54)-C(5))-methyltransferase</fullName>
    </alternativeName>
    <alternativeName>
        <fullName evidence="1">tRNA(m5U54)-methyltransferase</fullName>
        <shortName evidence="1">RUMT</shortName>
    </alternativeName>
    <alternativeName>
        <fullName evidence="1">tmRNA (uracil(341)-C(5))-methyltransferase</fullName>
    </alternativeName>
</protein>
<comment type="function">
    <text evidence="1">Dual-specificity methyltransferase that catalyzes the formation of 5-methyluridine at position 54 (m5U54) in all tRNAs, and that of position 341 (m5U341) in tmRNA (transfer-mRNA).</text>
</comment>
<comment type="catalytic activity">
    <reaction evidence="1">
        <text>uridine(54) in tRNA + S-adenosyl-L-methionine = 5-methyluridine(54) in tRNA + S-adenosyl-L-homocysteine + H(+)</text>
        <dbReference type="Rhea" id="RHEA:42712"/>
        <dbReference type="Rhea" id="RHEA-COMP:10167"/>
        <dbReference type="Rhea" id="RHEA-COMP:10193"/>
        <dbReference type="ChEBI" id="CHEBI:15378"/>
        <dbReference type="ChEBI" id="CHEBI:57856"/>
        <dbReference type="ChEBI" id="CHEBI:59789"/>
        <dbReference type="ChEBI" id="CHEBI:65315"/>
        <dbReference type="ChEBI" id="CHEBI:74447"/>
        <dbReference type="EC" id="2.1.1.35"/>
    </reaction>
</comment>
<comment type="catalytic activity">
    <reaction evidence="1">
        <text>uridine(341) in tmRNA + S-adenosyl-L-methionine = 5-methyluridine(341) in tmRNA + S-adenosyl-L-homocysteine + H(+)</text>
        <dbReference type="Rhea" id="RHEA:43612"/>
        <dbReference type="Rhea" id="RHEA-COMP:10630"/>
        <dbReference type="Rhea" id="RHEA-COMP:10631"/>
        <dbReference type="ChEBI" id="CHEBI:15378"/>
        <dbReference type="ChEBI" id="CHEBI:57856"/>
        <dbReference type="ChEBI" id="CHEBI:59789"/>
        <dbReference type="ChEBI" id="CHEBI:65315"/>
        <dbReference type="ChEBI" id="CHEBI:74447"/>
    </reaction>
</comment>
<comment type="similarity">
    <text evidence="1">Belongs to the class I-like SAM-binding methyltransferase superfamily. RNA M5U methyltransferase family. TrmA subfamily.</text>
</comment>
<gene>
    <name evidence="1" type="primary">trmA</name>
    <name type="ordered locus">KPK_5427</name>
</gene>
<reference key="1">
    <citation type="journal article" date="2008" name="PLoS Genet.">
        <title>Complete genome sequence of the N2-fixing broad host range endophyte Klebsiella pneumoniae 342 and virulence predictions verified in mice.</title>
        <authorList>
            <person name="Fouts D.E."/>
            <person name="Tyler H.L."/>
            <person name="DeBoy R.T."/>
            <person name="Daugherty S."/>
            <person name="Ren Q."/>
            <person name="Badger J.H."/>
            <person name="Durkin A.S."/>
            <person name="Huot H."/>
            <person name="Shrivastava S."/>
            <person name="Kothari S."/>
            <person name="Dodson R.J."/>
            <person name="Mohamoud Y."/>
            <person name="Khouri H."/>
            <person name="Roesch L.F.W."/>
            <person name="Krogfelt K.A."/>
            <person name="Struve C."/>
            <person name="Triplett E.W."/>
            <person name="Methe B.A."/>
        </authorList>
    </citation>
    <scope>NUCLEOTIDE SEQUENCE [LARGE SCALE GENOMIC DNA]</scope>
    <source>
        <strain>342</strain>
    </source>
</reference>